<proteinExistence type="inferred from homology"/>
<name>MURC_BIFAA</name>
<reference key="1">
    <citation type="submission" date="2006-12" db="EMBL/GenBank/DDBJ databases">
        <title>Bifidobacterium adolescentis complete genome sequence.</title>
        <authorList>
            <person name="Suzuki T."/>
            <person name="Tsuda Y."/>
            <person name="Kanou N."/>
            <person name="Inoue T."/>
            <person name="Kumazaki K."/>
            <person name="Nagano S."/>
            <person name="Hirai S."/>
            <person name="Tanaka K."/>
            <person name="Watanabe K."/>
        </authorList>
    </citation>
    <scope>NUCLEOTIDE SEQUENCE [LARGE SCALE GENOMIC DNA]</scope>
    <source>
        <strain>ATCC 15703 / DSM 20083 / NCTC 11814 / E194a</strain>
    </source>
</reference>
<keyword id="KW-0067">ATP-binding</keyword>
<keyword id="KW-0131">Cell cycle</keyword>
<keyword id="KW-0132">Cell division</keyword>
<keyword id="KW-0133">Cell shape</keyword>
<keyword id="KW-0961">Cell wall biogenesis/degradation</keyword>
<keyword id="KW-0963">Cytoplasm</keyword>
<keyword id="KW-0436">Ligase</keyword>
<keyword id="KW-0547">Nucleotide-binding</keyword>
<keyword id="KW-0573">Peptidoglycan synthesis</keyword>
<keyword id="KW-1185">Reference proteome</keyword>
<evidence type="ECO:0000255" key="1">
    <source>
        <dbReference type="HAMAP-Rule" id="MF_00046"/>
    </source>
</evidence>
<accession>A1A2E8</accession>
<feature type="chain" id="PRO_1000004313" description="UDP-N-acetylmuramate--L-alanine ligase">
    <location>
        <begin position="1"/>
        <end position="521"/>
    </location>
</feature>
<feature type="binding site" evidence="1">
    <location>
        <begin position="136"/>
        <end position="142"/>
    </location>
    <ligand>
        <name>ATP</name>
        <dbReference type="ChEBI" id="CHEBI:30616"/>
    </ligand>
</feature>
<sequence length="521" mass="55602">MSDNQREAGTIILDPTHASFAPEETVHDLGATHFIGIGGAGMSVLAEMLHEQGVEVDGSDREPSAKTDRLQSLGITVEFGQQAKNVEGKNTVVFSSAIKPDNPEIVAAHEAGERIVHRSDILALLMNAKRAVTVAGAHGKTTTSSMLAHILVNAGEGELADPSYAIGGSIQGKDGAILDGGHAGKGNVLVAEADESDGSFAKYHPQIAIITNSEADHLDHYGTQDNYRAAFVDHAGHATKAVIMCGDDEGNLAVLRALDATVAGRTIVYSTRNAAELGDLNGATLVRIESESETAESGAEHFTLHIPGGLIGEEERRIAVTLTVPGIHNARNASAAIIAAALLGMDVERASAAVTSFLGAARRFQVRGTVSQVTVVDDYAHHPTEIAALLDAARRRYPQSKIRVIFQPHLFSRTRFFSSEFAQALAKADDVIVTGIFPAREKQEDFPDVTPATIVDEALKLEHEPAKDWIRGVEDMHTAAQMMVMRAHHGDVIFTVGAGDITQMDEVILHALEAHRWDCEG</sequence>
<comment type="function">
    <text evidence="1">Cell wall formation.</text>
</comment>
<comment type="catalytic activity">
    <reaction evidence="1">
        <text>UDP-N-acetyl-alpha-D-muramate + L-alanine + ATP = UDP-N-acetyl-alpha-D-muramoyl-L-alanine + ADP + phosphate + H(+)</text>
        <dbReference type="Rhea" id="RHEA:23372"/>
        <dbReference type="ChEBI" id="CHEBI:15378"/>
        <dbReference type="ChEBI" id="CHEBI:30616"/>
        <dbReference type="ChEBI" id="CHEBI:43474"/>
        <dbReference type="ChEBI" id="CHEBI:57972"/>
        <dbReference type="ChEBI" id="CHEBI:70757"/>
        <dbReference type="ChEBI" id="CHEBI:83898"/>
        <dbReference type="ChEBI" id="CHEBI:456216"/>
        <dbReference type="EC" id="6.3.2.8"/>
    </reaction>
</comment>
<comment type="pathway">
    <text evidence="1">Cell wall biogenesis; peptidoglycan biosynthesis.</text>
</comment>
<comment type="subcellular location">
    <subcellularLocation>
        <location evidence="1">Cytoplasm</location>
    </subcellularLocation>
</comment>
<comment type="similarity">
    <text evidence="1">Belongs to the MurCDEF family.</text>
</comment>
<organism>
    <name type="scientific">Bifidobacterium adolescentis (strain ATCC 15703 / DSM 20083 / NCTC 11814 / E194a)</name>
    <dbReference type="NCBI Taxonomy" id="367928"/>
    <lineage>
        <taxon>Bacteria</taxon>
        <taxon>Bacillati</taxon>
        <taxon>Actinomycetota</taxon>
        <taxon>Actinomycetes</taxon>
        <taxon>Bifidobacteriales</taxon>
        <taxon>Bifidobacteriaceae</taxon>
        <taxon>Bifidobacterium</taxon>
    </lineage>
</organism>
<dbReference type="EC" id="6.3.2.8" evidence="1"/>
<dbReference type="EMBL" id="AP009256">
    <property type="protein sequence ID" value="BAF39881.1"/>
    <property type="molecule type" value="Genomic_DNA"/>
</dbReference>
<dbReference type="RefSeq" id="WP_011743442.1">
    <property type="nucleotide sequence ID" value="NZ_CAXVNC010000002.1"/>
</dbReference>
<dbReference type="SMR" id="A1A2E8"/>
<dbReference type="STRING" id="367928.BAD_1100"/>
<dbReference type="PaxDb" id="1680-BADO_1150"/>
<dbReference type="GeneID" id="4556373"/>
<dbReference type="KEGG" id="bad:BAD_1100"/>
<dbReference type="HOGENOM" id="CLU_028104_2_1_11"/>
<dbReference type="UniPathway" id="UPA00219"/>
<dbReference type="Proteomes" id="UP000008702">
    <property type="component" value="Chromosome"/>
</dbReference>
<dbReference type="GO" id="GO:0005737">
    <property type="term" value="C:cytoplasm"/>
    <property type="evidence" value="ECO:0007669"/>
    <property type="project" value="UniProtKB-SubCell"/>
</dbReference>
<dbReference type="GO" id="GO:0005524">
    <property type="term" value="F:ATP binding"/>
    <property type="evidence" value="ECO:0007669"/>
    <property type="project" value="UniProtKB-UniRule"/>
</dbReference>
<dbReference type="GO" id="GO:0008763">
    <property type="term" value="F:UDP-N-acetylmuramate-L-alanine ligase activity"/>
    <property type="evidence" value="ECO:0007669"/>
    <property type="project" value="UniProtKB-UniRule"/>
</dbReference>
<dbReference type="GO" id="GO:0051301">
    <property type="term" value="P:cell division"/>
    <property type="evidence" value="ECO:0007669"/>
    <property type="project" value="UniProtKB-KW"/>
</dbReference>
<dbReference type="GO" id="GO:0071555">
    <property type="term" value="P:cell wall organization"/>
    <property type="evidence" value="ECO:0007669"/>
    <property type="project" value="UniProtKB-KW"/>
</dbReference>
<dbReference type="GO" id="GO:0009252">
    <property type="term" value="P:peptidoglycan biosynthetic process"/>
    <property type="evidence" value="ECO:0007669"/>
    <property type="project" value="UniProtKB-UniRule"/>
</dbReference>
<dbReference type="GO" id="GO:0008360">
    <property type="term" value="P:regulation of cell shape"/>
    <property type="evidence" value="ECO:0007669"/>
    <property type="project" value="UniProtKB-KW"/>
</dbReference>
<dbReference type="Gene3D" id="3.90.190.20">
    <property type="entry name" value="Mur ligase, C-terminal domain"/>
    <property type="match status" value="1"/>
</dbReference>
<dbReference type="Gene3D" id="3.40.1190.10">
    <property type="entry name" value="Mur-like, catalytic domain"/>
    <property type="match status" value="1"/>
</dbReference>
<dbReference type="Gene3D" id="3.40.50.720">
    <property type="entry name" value="NAD(P)-binding Rossmann-like Domain"/>
    <property type="match status" value="1"/>
</dbReference>
<dbReference type="HAMAP" id="MF_00046">
    <property type="entry name" value="MurC"/>
    <property type="match status" value="1"/>
</dbReference>
<dbReference type="InterPro" id="IPR036565">
    <property type="entry name" value="Mur-like_cat_sf"/>
</dbReference>
<dbReference type="InterPro" id="IPR004101">
    <property type="entry name" value="Mur_ligase_C"/>
</dbReference>
<dbReference type="InterPro" id="IPR036615">
    <property type="entry name" value="Mur_ligase_C_dom_sf"/>
</dbReference>
<dbReference type="InterPro" id="IPR013221">
    <property type="entry name" value="Mur_ligase_cen"/>
</dbReference>
<dbReference type="InterPro" id="IPR000713">
    <property type="entry name" value="Mur_ligase_N"/>
</dbReference>
<dbReference type="InterPro" id="IPR050061">
    <property type="entry name" value="MurCDEF_pg_biosynth"/>
</dbReference>
<dbReference type="InterPro" id="IPR005758">
    <property type="entry name" value="UDP-N-AcMur_Ala_ligase_MurC"/>
</dbReference>
<dbReference type="NCBIfam" id="TIGR01082">
    <property type="entry name" value="murC"/>
    <property type="match status" value="1"/>
</dbReference>
<dbReference type="PANTHER" id="PTHR43445:SF3">
    <property type="entry name" value="UDP-N-ACETYLMURAMATE--L-ALANINE LIGASE"/>
    <property type="match status" value="1"/>
</dbReference>
<dbReference type="PANTHER" id="PTHR43445">
    <property type="entry name" value="UDP-N-ACETYLMURAMATE--L-ALANINE LIGASE-RELATED"/>
    <property type="match status" value="1"/>
</dbReference>
<dbReference type="Pfam" id="PF01225">
    <property type="entry name" value="Mur_ligase"/>
    <property type="match status" value="1"/>
</dbReference>
<dbReference type="Pfam" id="PF02875">
    <property type="entry name" value="Mur_ligase_C"/>
    <property type="match status" value="1"/>
</dbReference>
<dbReference type="Pfam" id="PF08245">
    <property type="entry name" value="Mur_ligase_M"/>
    <property type="match status" value="1"/>
</dbReference>
<dbReference type="SUPFAM" id="SSF51984">
    <property type="entry name" value="MurCD N-terminal domain"/>
    <property type="match status" value="1"/>
</dbReference>
<dbReference type="SUPFAM" id="SSF53623">
    <property type="entry name" value="MurD-like peptide ligases, catalytic domain"/>
    <property type="match status" value="1"/>
</dbReference>
<dbReference type="SUPFAM" id="SSF53244">
    <property type="entry name" value="MurD-like peptide ligases, peptide-binding domain"/>
    <property type="match status" value="1"/>
</dbReference>
<protein>
    <recommendedName>
        <fullName evidence="1">UDP-N-acetylmuramate--L-alanine ligase</fullName>
        <ecNumber evidence="1">6.3.2.8</ecNumber>
    </recommendedName>
    <alternativeName>
        <fullName evidence="1">UDP-N-acetylmuramoyl-L-alanine synthetase</fullName>
    </alternativeName>
</protein>
<gene>
    <name evidence="1" type="primary">murC</name>
    <name type="ordered locus">BAD_1100</name>
</gene>